<gene>
    <name type="primary">mypop</name>
    <name type="synonym">p42pop</name>
</gene>
<sequence length="341" mass="37786">MSGDTEEVTRLRKPRFSYEENQILIREVRAHYPMLYGAQSRRLSVAERRRVWEGIAAKINAITNWKRTAQEVQKRWNDFKRRTKEKLARVPHSTQSGTAEEAMTAEEETIFAILGPGVMPGSSHYGPVTHLGAMDFNPSGPGSSSPETSLSAPCAPIEAPLLLHPKESPSPTSQLHIVQLPHLTPSPDPSECPSPPPPGSGTPLLTPSGVAQHYDPTVAMLRAQQETAEAIRHLTYTLRQSMDRLTNVLAAILPLVPHQPPESPTPSGILGPVYYPTKTEPESEPCCPVTYEEENGEDGGEEEIQEVIAEPPRSPSPPPPNKRKRFGYLSQRKRRGRWKNL</sequence>
<organism>
    <name type="scientific">Xenopus laevis</name>
    <name type="common">African clawed frog</name>
    <dbReference type="NCBI Taxonomy" id="8355"/>
    <lineage>
        <taxon>Eukaryota</taxon>
        <taxon>Metazoa</taxon>
        <taxon>Chordata</taxon>
        <taxon>Craniata</taxon>
        <taxon>Vertebrata</taxon>
        <taxon>Euteleostomi</taxon>
        <taxon>Amphibia</taxon>
        <taxon>Batrachia</taxon>
        <taxon>Anura</taxon>
        <taxon>Pipoidea</taxon>
        <taxon>Pipidae</taxon>
        <taxon>Xenopodinae</taxon>
        <taxon>Xenopus</taxon>
        <taxon>Xenopus</taxon>
    </lineage>
</organism>
<name>MYPOP_XENLA</name>
<comment type="function">
    <text evidence="1">Transcriptional repressor; DNA-binding protein that specifically recognizes the core sequence 5'-YAAC[GT]G-3'.</text>
</comment>
<comment type="subcellular location">
    <subcellularLocation>
        <location evidence="1">Nucleus</location>
    </subcellularLocation>
</comment>
<comment type="sequence caution" evidence="4">
    <conflict type="miscellaneous discrepancy">
        <sequence resource="EMBL-CDS" id="AAH56084"/>
    </conflict>
    <text>Contaminating sequence. Potential poly-A sequence.</text>
</comment>
<reference key="1">
    <citation type="submission" date="2006-10" db="EMBL/GenBank/DDBJ databases">
        <authorList>
            <consortium name="NIH - Xenopus Gene Collection (XGC) project"/>
        </authorList>
    </citation>
    <scope>NUCLEOTIDE SEQUENCE [LARGE SCALE MRNA]</scope>
    <source>
        <tissue>Embryo</tissue>
        <tissue>Spleen</tissue>
    </source>
</reference>
<keyword id="KW-0238">DNA-binding</keyword>
<keyword id="KW-0539">Nucleus</keyword>
<keyword id="KW-1185">Reference proteome</keyword>
<keyword id="KW-0678">Repressor</keyword>
<keyword id="KW-0804">Transcription</keyword>
<keyword id="KW-0805">Transcription regulation</keyword>
<evidence type="ECO:0000250" key="1"/>
<evidence type="ECO:0000255" key="2">
    <source>
        <dbReference type="PROSITE-ProRule" id="PRU00133"/>
    </source>
</evidence>
<evidence type="ECO:0000256" key="3">
    <source>
        <dbReference type="SAM" id="MobiDB-lite"/>
    </source>
</evidence>
<evidence type="ECO:0000305" key="4"/>
<protein>
    <recommendedName>
        <fullName>Myb-related transcription factor, partner of profilin</fullName>
    </recommendedName>
    <alternativeName>
        <fullName>Myb-related protein p42POP</fullName>
    </alternativeName>
</protein>
<accession>Q08B72</accession>
<accession>Q7T0Q7</accession>
<dbReference type="EMBL" id="BC056084">
    <property type="protein sequence ID" value="AAH56084.1"/>
    <property type="status" value="ALT_SEQ"/>
    <property type="molecule type" value="mRNA"/>
</dbReference>
<dbReference type="EMBL" id="BC124852">
    <property type="protein sequence ID" value="AAI24853.1"/>
    <property type="molecule type" value="mRNA"/>
</dbReference>
<dbReference type="RefSeq" id="NP_001116348.1">
    <property type="nucleotide sequence ID" value="NM_001122876.1"/>
</dbReference>
<dbReference type="SMR" id="Q08B72"/>
<dbReference type="DNASU" id="398691"/>
<dbReference type="GeneID" id="398691"/>
<dbReference type="KEGG" id="xla:398691"/>
<dbReference type="AGR" id="Xenbase:XB-GENE-999501"/>
<dbReference type="CTD" id="398691"/>
<dbReference type="Xenbase" id="XB-GENE-999501">
    <property type="gene designation" value="mypop.L"/>
</dbReference>
<dbReference type="OrthoDB" id="9940550at2759"/>
<dbReference type="Proteomes" id="UP000186698">
    <property type="component" value="Chromosome 8L"/>
</dbReference>
<dbReference type="Bgee" id="398691">
    <property type="expression patterns" value="Expressed in testis and 19 other cell types or tissues"/>
</dbReference>
<dbReference type="GO" id="GO:0005634">
    <property type="term" value="C:nucleus"/>
    <property type="evidence" value="ECO:0000318"/>
    <property type="project" value="GO_Central"/>
</dbReference>
<dbReference type="GO" id="GO:0000981">
    <property type="term" value="F:DNA-binding transcription factor activity, RNA polymerase II-specific"/>
    <property type="evidence" value="ECO:0000318"/>
    <property type="project" value="GO_Central"/>
</dbReference>
<dbReference type="GO" id="GO:0000978">
    <property type="term" value="F:RNA polymerase II cis-regulatory region sequence-specific DNA binding"/>
    <property type="evidence" value="ECO:0000318"/>
    <property type="project" value="GO_Central"/>
</dbReference>
<dbReference type="GO" id="GO:0006357">
    <property type="term" value="P:regulation of transcription by RNA polymerase II"/>
    <property type="evidence" value="ECO:0000318"/>
    <property type="project" value="GO_Central"/>
</dbReference>
<dbReference type="InterPro" id="IPR052870">
    <property type="entry name" value="Myb-related_repressor"/>
</dbReference>
<dbReference type="InterPro" id="IPR028002">
    <property type="entry name" value="Myb_DNA-bind_5"/>
</dbReference>
<dbReference type="InterPro" id="IPR001005">
    <property type="entry name" value="SANT/Myb"/>
</dbReference>
<dbReference type="PANTHER" id="PTHR32345">
    <property type="entry name" value="MYB-RELATED TRANSCRIPTION FACTOR, PARTNER OF PROFILIN"/>
    <property type="match status" value="1"/>
</dbReference>
<dbReference type="PANTHER" id="PTHR32345:SF3">
    <property type="entry name" value="MYB-RELATED TRANSCRIPTION FACTOR, PARTNER OF PROFILIN"/>
    <property type="match status" value="1"/>
</dbReference>
<dbReference type="Pfam" id="PF13873">
    <property type="entry name" value="Myb_DNA-bind_5"/>
    <property type="match status" value="1"/>
</dbReference>
<dbReference type="PROSITE" id="PS50090">
    <property type="entry name" value="MYB_LIKE"/>
    <property type="match status" value="1"/>
</dbReference>
<feature type="chain" id="PRO_0000344801" description="Myb-related transcription factor, partner of profilin">
    <location>
        <begin position="1"/>
        <end position="341"/>
    </location>
</feature>
<feature type="domain" description="Myb-like" evidence="2">
    <location>
        <begin position="8"/>
        <end position="80"/>
    </location>
</feature>
<feature type="region of interest" description="Disordered" evidence="3">
    <location>
        <begin position="84"/>
        <end position="103"/>
    </location>
</feature>
<feature type="region of interest" description="Disordered" evidence="3">
    <location>
        <begin position="180"/>
        <end position="210"/>
    </location>
</feature>
<feature type="region of interest" description="Disordered" evidence="3">
    <location>
        <begin position="309"/>
        <end position="341"/>
    </location>
</feature>
<feature type="compositionally biased region" description="Pro residues" evidence="3">
    <location>
        <begin position="184"/>
        <end position="200"/>
    </location>
</feature>
<feature type="compositionally biased region" description="Basic residues" evidence="3">
    <location>
        <begin position="321"/>
        <end position="341"/>
    </location>
</feature>
<proteinExistence type="evidence at transcript level"/>